<comment type="function">
    <text evidence="1">Catalyzes the reversible epimerization at C-2 of UDP-N-acetylglucosamine (UDP-GlcNAc) and thereby provides bacteria with UDP-N-acetylmannosamine (UDP-ManNAc), the activated donor of ManNAc residues.</text>
</comment>
<comment type="catalytic activity">
    <reaction evidence="1">
        <text>UDP-N-acetyl-alpha-D-glucosamine = UDP-N-acetyl-alpha-D-mannosamine</text>
        <dbReference type="Rhea" id="RHEA:17213"/>
        <dbReference type="ChEBI" id="CHEBI:57705"/>
        <dbReference type="ChEBI" id="CHEBI:68623"/>
        <dbReference type="EC" id="5.1.3.14"/>
    </reaction>
</comment>
<comment type="pathway">
    <text evidence="1">Bacterial outer membrane biogenesis; enterobacterial common antigen biosynthesis.</text>
</comment>
<comment type="subunit">
    <text evidence="1">Homodimer.</text>
</comment>
<comment type="subcellular location">
    <subcellularLocation>
        <location evidence="1">Cytoplasm</location>
    </subcellularLocation>
</comment>
<comment type="similarity">
    <text evidence="1">Belongs to the UDP-N-acetylglucosamine 2-epimerase family.</text>
</comment>
<comment type="sequence caution" evidence="2">
    <conflict type="erroneous initiation">
        <sequence resource="EMBL-CDS" id="AAM83953"/>
    </conflict>
</comment>
<comment type="sequence caution" evidence="2">
    <conflict type="erroneous initiation">
        <sequence resource="EMBL-CDS" id="AAS63349"/>
    </conflict>
</comment>
<keyword id="KW-0963">Cytoplasm</keyword>
<keyword id="KW-0413">Isomerase</keyword>
<keyword id="KW-1185">Reference proteome</keyword>
<feature type="chain" id="PRO_0000208531" description="UDP-N-acetylglucosamine 2-epimerase">
    <location>
        <begin position="1"/>
        <end position="376"/>
    </location>
</feature>
<feature type="binding site" evidence="1">
    <location>
        <position position="10"/>
    </location>
    <ligand>
        <name>substrate</name>
    </ligand>
</feature>
<feature type="binding site" evidence="1">
    <location>
        <position position="15"/>
    </location>
    <ligand>
        <name>substrate</name>
    </ligand>
</feature>
<feature type="binding site" evidence="1">
    <location>
        <position position="95"/>
    </location>
    <ligand>
        <name>substrate</name>
    </ligand>
</feature>
<feature type="binding site" evidence="1">
    <location>
        <position position="117"/>
    </location>
    <ligand>
        <name>substrate</name>
    </ligand>
</feature>
<feature type="binding site" evidence="1">
    <location>
        <position position="213"/>
    </location>
    <ligand>
        <name>substrate</name>
    </ligand>
</feature>
<feature type="binding site" evidence="1">
    <location>
        <position position="271"/>
    </location>
    <ligand>
        <name>substrate</name>
    </ligand>
</feature>
<feature type="binding site" evidence="1">
    <location>
        <position position="276"/>
    </location>
    <ligand>
        <name>substrate</name>
    </ligand>
</feature>
<feature type="binding site" evidence="1">
    <location>
        <begin position="290"/>
        <end position="292"/>
    </location>
    <ligand>
        <name>substrate</name>
    </ligand>
</feature>
<feature type="binding site" evidence="1">
    <location>
        <position position="296"/>
    </location>
    <ligand>
        <name>substrate</name>
    </ligand>
</feature>
<feature type="binding site" evidence="1">
    <location>
        <position position="313"/>
    </location>
    <ligand>
        <name>substrate</name>
    </ligand>
</feature>
<reference key="1">
    <citation type="journal article" date="2001" name="Nature">
        <title>Genome sequence of Yersinia pestis, the causative agent of plague.</title>
        <authorList>
            <person name="Parkhill J."/>
            <person name="Wren B.W."/>
            <person name="Thomson N.R."/>
            <person name="Titball R.W."/>
            <person name="Holden M.T.G."/>
            <person name="Prentice M.B."/>
            <person name="Sebaihia M."/>
            <person name="James K.D."/>
            <person name="Churcher C.M."/>
            <person name="Mungall K.L."/>
            <person name="Baker S."/>
            <person name="Basham D."/>
            <person name="Bentley S.D."/>
            <person name="Brooks K."/>
            <person name="Cerdeno-Tarraga A.-M."/>
            <person name="Chillingworth T."/>
            <person name="Cronin A."/>
            <person name="Davies R.M."/>
            <person name="Davis P."/>
            <person name="Dougan G."/>
            <person name="Feltwell T."/>
            <person name="Hamlin N."/>
            <person name="Holroyd S."/>
            <person name="Jagels K."/>
            <person name="Karlyshev A.V."/>
            <person name="Leather S."/>
            <person name="Moule S."/>
            <person name="Oyston P.C.F."/>
            <person name="Quail M.A."/>
            <person name="Rutherford K.M."/>
            <person name="Simmonds M."/>
            <person name="Skelton J."/>
            <person name="Stevens K."/>
            <person name="Whitehead S."/>
            <person name="Barrell B.G."/>
        </authorList>
    </citation>
    <scope>NUCLEOTIDE SEQUENCE [LARGE SCALE GENOMIC DNA]</scope>
    <source>
        <strain>CO-92 / Biovar Orientalis</strain>
    </source>
</reference>
<reference key="2">
    <citation type="journal article" date="2002" name="J. Bacteriol.">
        <title>Genome sequence of Yersinia pestis KIM.</title>
        <authorList>
            <person name="Deng W."/>
            <person name="Burland V."/>
            <person name="Plunkett G. III"/>
            <person name="Boutin A."/>
            <person name="Mayhew G.F."/>
            <person name="Liss P."/>
            <person name="Perna N.T."/>
            <person name="Rose D.J."/>
            <person name="Mau B."/>
            <person name="Zhou S."/>
            <person name="Schwartz D.C."/>
            <person name="Fetherston J.D."/>
            <person name="Lindler L.E."/>
            <person name="Brubaker R.R."/>
            <person name="Plano G.V."/>
            <person name="Straley S.C."/>
            <person name="McDonough K.A."/>
            <person name="Nilles M.L."/>
            <person name="Matson J.S."/>
            <person name="Blattner F.R."/>
            <person name="Perry R.D."/>
        </authorList>
    </citation>
    <scope>NUCLEOTIDE SEQUENCE [LARGE SCALE GENOMIC DNA]</scope>
    <source>
        <strain>KIM10+ / Biovar Mediaevalis</strain>
    </source>
</reference>
<reference key="3">
    <citation type="journal article" date="2004" name="DNA Res.">
        <title>Complete genome sequence of Yersinia pestis strain 91001, an isolate avirulent to humans.</title>
        <authorList>
            <person name="Song Y."/>
            <person name="Tong Z."/>
            <person name="Wang J."/>
            <person name="Wang L."/>
            <person name="Guo Z."/>
            <person name="Han Y."/>
            <person name="Zhang J."/>
            <person name="Pei D."/>
            <person name="Zhou D."/>
            <person name="Qin H."/>
            <person name="Pang X."/>
            <person name="Han Y."/>
            <person name="Zhai J."/>
            <person name="Li M."/>
            <person name="Cui B."/>
            <person name="Qi Z."/>
            <person name="Jin L."/>
            <person name="Dai R."/>
            <person name="Chen F."/>
            <person name="Li S."/>
            <person name="Ye C."/>
            <person name="Du Z."/>
            <person name="Lin W."/>
            <person name="Wang J."/>
            <person name="Yu J."/>
            <person name="Yang H."/>
            <person name="Wang J."/>
            <person name="Huang P."/>
            <person name="Yang R."/>
        </authorList>
    </citation>
    <scope>NUCLEOTIDE SEQUENCE [LARGE SCALE GENOMIC DNA]</scope>
    <source>
        <strain>91001 / Biovar Mediaevalis</strain>
    </source>
</reference>
<organism>
    <name type="scientific">Yersinia pestis</name>
    <dbReference type="NCBI Taxonomy" id="632"/>
    <lineage>
        <taxon>Bacteria</taxon>
        <taxon>Pseudomonadati</taxon>
        <taxon>Pseudomonadota</taxon>
        <taxon>Gammaproteobacteria</taxon>
        <taxon>Enterobacterales</taxon>
        <taxon>Yersiniaceae</taxon>
        <taxon>Yersinia</taxon>
    </lineage>
</organism>
<dbReference type="EC" id="5.1.3.14" evidence="1"/>
<dbReference type="EMBL" id="AL590842">
    <property type="protein sequence ID" value="CAL22451.1"/>
    <property type="molecule type" value="Genomic_DNA"/>
</dbReference>
<dbReference type="EMBL" id="AE009952">
    <property type="protein sequence ID" value="AAM83953.1"/>
    <property type="status" value="ALT_INIT"/>
    <property type="molecule type" value="Genomic_DNA"/>
</dbReference>
<dbReference type="EMBL" id="AE017042">
    <property type="protein sequence ID" value="AAS63349.1"/>
    <property type="status" value="ALT_INIT"/>
    <property type="molecule type" value="Genomic_DNA"/>
</dbReference>
<dbReference type="PIR" id="AH0470">
    <property type="entry name" value="AH0470"/>
</dbReference>
<dbReference type="RefSeq" id="WP_002211986.1">
    <property type="nucleotide sequence ID" value="NZ_WUCM01000073.1"/>
</dbReference>
<dbReference type="RefSeq" id="YP_002348742.1">
    <property type="nucleotide sequence ID" value="NC_003143.1"/>
</dbReference>
<dbReference type="SMR" id="Q8ZAE3"/>
<dbReference type="STRING" id="214092.YPO3864"/>
<dbReference type="PaxDb" id="214092-YPO3864"/>
<dbReference type="DNASU" id="1145311"/>
<dbReference type="EnsemblBacteria" id="AAS63349">
    <property type="protein sequence ID" value="AAS63349"/>
    <property type="gene ID" value="YP_3181"/>
</dbReference>
<dbReference type="GeneID" id="57974839"/>
<dbReference type="KEGG" id="ype:YPO3864"/>
<dbReference type="KEGG" id="ypk:y0364"/>
<dbReference type="KEGG" id="ypm:YP_3181"/>
<dbReference type="PATRIC" id="fig|214092.21.peg.4390"/>
<dbReference type="eggNOG" id="COG0381">
    <property type="taxonomic scope" value="Bacteria"/>
</dbReference>
<dbReference type="HOGENOM" id="CLU_041674_1_0_6"/>
<dbReference type="OMA" id="HAMSRAH"/>
<dbReference type="OrthoDB" id="9803238at2"/>
<dbReference type="UniPathway" id="UPA00566"/>
<dbReference type="Proteomes" id="UP000000815">
    <property type="component" value="Chromosome"/>
</dbReference>
<dbReference type="Proteomes" id="UP000001019">
    <property type="component" value="Chromosome"/>
</dbReference>
<dbReference type="Proteomes" id="UP000002490">
    <property type="component" value="Chromosome"/>
</dbReference>
<dbReference type="GO" id="GO:0005737">
    <property type="term" value="C:cytoplasm"/>
    <property type="evidence" value="ECO:0007669"/>
    <property type="project" value="UniProtKB-SubCell"/>
</dbReference>
<dbReference type="GO" id="GO:0008761">
    <property type="term" value="F:UDP-N-acetylglucosamine 2-epimerase activity"/>
    <property type="evidence" value="ECO:0007669"/>
    <property type="project" value="UniProtKB-UniRule"/>
</dbReference>
<dbReference type="GO" id="GO:0009246">
    <property type="term" value="P:enterobacterial common antigen biosynthetic process"/>
    <property type="evidence" value="ECO:0007669"/>
    <property type="project" value="UniProtKB-UniRule"/>
</dbReference>
<dbReference type="CDD" id="cd03786">
    <property type="entry name" value="GTB_UDP-GlcNAc_2-Epimerase"/>
    <property type="match status" value="1"/>
</dbReference>
<dbReference type="FunFam" id="3.40.50.2000:FF:000043">
    <property type="entry name" value="UDP-N-acetylglucosamine 2-epimerase"/>
    <property type="match status" value="1"/>
</dbReference>
<dbReference type="Gene3D" id="3.40.50.2000">
    <property type="entry name" value="Glycogen Phosphorylase B"/>
    <property type="match status" value="2"/>
</dbReference>
<dbReference type="HAMAP" id="MF_02028">
    <property type="entry name" value="WecB_RffE"/>
    <property type="match status" value="1"/>
</dbReference>
<dbReference type="InterPro" id="IPR003331">
    <property type="entry name" value="UDP_GlcNAc_Epimerase_2_dom"/>
</dbReference>
<dbReference type="InterPro" id="IPR032892">
    <property type="entry name" value="WecB"/>
</dbReference>
<dbReference type="InterPro" id="IPR029767">
    <property type="entry name" value="WecB-like"/>
</dbReference>
<dbReference type="NCBIfam" id="TIGR00236">
    <property type="entry name" value="wecB"/>
    <property type="match status" value="1"/>
</dbReference>
<dbReference type="PANTHER" id="PTHR43174">
    <property type="entry name" value="UDP-N-ACETYLGLUCOSAMINE 2-EPIMERASE"/>
    <property type="match status" value="1"/>
</dbReference>
<dbReference type="PANTHER" id="PTHR43174:SF2">
    <property type="entry name" value="UDP-N-ACETYLGLUCOSAMINE 2-EPIMERASE"/>
    <property type="match status" value="1"/>
</dbReference>
<dbReference type="Pfam" id="PF02350">
    <property type="entry name" value="Epimerase_2"/>
    <property type="match status" value="1"/>
</dbReference>
<dbReference type="SUPFAM" id="SSF53756">
    <property type="entry name" value="UDP-Glycosyltransferase/glycogen phosphorylase"/>
    <property type="match status" value="1"/>
</dbReference>
<proteinExistence type="inferred from homology"/>
<protein>
    <recommendedName>
        <fullName evidence="1">UDP-N-acetylglucosamine 2-epimerase</fullName>
        <ecNumber evidence="1">5.1.3.14</ecNumber>
    </recommendedName>
    <alternativeName>
        <fullName evidence="1">UDP-GlcNAc-2-epimerase</fullName>
    </alternativeName>
</protein>
<gene>
    <name evidence="1" type="primary">wecB</name>
    <name type="synonym">rffE</name>
    <name type="ordered locus">YPO3864</name>
    <name type="ordered locus">y0364</name>
    <name type="ordered locus">YP_3181</name>
</gene>
<name>WECB_YERPE</name>
<evidence type="ECO:0000255" key="1">
    <source>
        <dbReference type="HAMAP-Rule" id="MF_02028"/>
    </source>
</evidence>
<evidence type="ECO:0000305" key="2"/>
<sequence>MKVLTVFGTRPEAIKMAPLVHALAQDDAFESRVCVTAQHREMLDQVLRLFEIQPDYDLDIMRPGQGLTEITCRILEGLKPVLEEFKPDVILVHGDTTTTLSASLAGFYHRIPVGHVEAGLRTGDLYSPWPEEANRQLTGHLAMYHFAPTENSRQNLLREWVPENRIFVTGNTVIDALFWVRDRVMNTPDLRANLAQRYAFLDTNKKMILVTGHRRESFGGGFERICSALAEIARKHPEVQVVYPVHLNPNVSEPVNRILKGIDNIILIDPQDYLPFVYLMNHAYLILTDSGGIQEEAPSLGKPVLVMRDTTERPEAVDSGTVLLVGTNINKIVDAVTRLLTDETAYHQMTRAHNPYGDGYACQRILKALKNHQVTL</sequence>
<accession>Q8ZAE3</accession>
<accession>Q0WAE6</accession>